<evidence type="ECO:0000250" key="1"/>
<evidence type="ECO:0000250" key="2">
    <source>
        <dbReference type="UniProtKB" id="P00338"/>
    </source>
</evidence>
<evidence type="ECO:0000250" key="3">
    <source>
        <dbReference type="UniProtKB" id="P04642"/>
    </source>
</evidence>
<evidence type="ECO:0000250" key="4">
    <source>
        <dbReference type="UniProtKB" id="P06151"/>
    </source>
</evidence>
<evidence type="ECO:0000305" key="5"/>
<reference key="1">
    <citation type="submission" date="2001-04" db="EMBL/GenBank/DDBJ databases">
        <title>Isolation of full-length cDNA clones from macaque brain cDNA libraries.</title>
        <authorList>
            <person name="Osada N."/>
            <person name="Hida M."/>
            <person name="Kusuda J."/>
            <person name="Tanuma R."/>
            <person name="Iseki K."/>
            <person name="Hirai M."/>
            <person name="Terao K."/>
            <person name="Suzuki Y."/>
            <person name="Sugano S."/>
            <person name="Hashimoto K."/>
        </authorList>
    </citation>
    <scope>NUCLEOTIDE SEQUENCE [LARGE SCALE MRNA]</scope>
    <source>
        <tissue>Frontal cortex</tissue>
    </source>
</reference>
<reference key="2">
    <citation type="submission" date="2003-10" db="EMBL/GenBank/DDBJ databases">
        <title>Isolation and characterization of cDNA for macaque neurological disease genes.</title>
        <authorList>
            <person name="Kusuda J."/>
            <person name="Osada N."/>
            <person name="Tanuma R."/>
            <person name="Hirata M."/>
            <person name="Sugano S."/>
            <person name="Hashimoto K."/>
        </authorList>
    </citation>
    <scope>NUCLEOTIDE SEQUENCE [LARGE SCALE MRNA]</scope>
    <source>
        <tissue>Brain cortex</tissue>
    </source>
</reference>
<reference key="3">
    <citation type="submission" date="2005-06" db="EMBL/GenBank/DDBJ databases">
        <title>DNA sequences of macaque genes expressed in brain or testis and its evolutionary implications.</title>
        <authorList>
            <consortium name="International consortium for macaque cDNA sequencing and analysis"/>
        </authorList>
    </citation>
    <scope>NUCLEOTIDE SEQUENCE [LARGE SCALE MRNA]</scope>
    <source>
        <tissue>Brain cortex</tissue>
    </source>
</reference>
<gene>
    <name type="primary">LDHA</name>
    <name type="ORF">QccE-13024</name>
    <name type="ORF">QccE-13248</name>
    <name type="ORF">QflA-14835</name>
</gene>
<sequence>MATLKDQLIHNLLKEEQTPQNKITVVGVGAVGMACAISILMKDLADELALVDVIEDKLKGEMMDLQHGSLFLRTPKIVSGKDYSVTANSKLVIITAGARQQEGESRLNLVQRNVNIFKFIVPNVVKYSPNCKLLIVSNPVDILTYVAWKISGFPKNRVIGSGCNLDSARFRYLMGERLGVHPLSCHGWVLGEHGDSSVPVWSGMNVAGVSLKTLHPDLGTDKDKEQWKEVHKQVVESAYEVIKLKGYTSWAIGLSVADLAESIMKNLRRVHPVSTMIKGLYGIKDDVFLSVPCILGQNGISDLVKVTLTPEEEARLKKSADTLWGIQKELQF</sequence>
<proteinExistence type="evidence at transcript level"/>
<dbReference type="EC" id="1.1.1.27" evidence="2"/>
<dbReference type="EMBL" id="AB060222">
    <property type="protein sequence ID" value="BAB41156.1"/>
    <property type="molecule type" value="mRNA"/>
</dbReference>
<dbReference type="EMBL" id="AB125176">
    <property type="protein sequence ID" value="BAD51964.1"/>
    <property type="molecule type" value="mRNA"/>
</dbReference>
<dbReference type="EMBL" id="AB169514">
    <property type="protein sequence ID" value="BAE01596.1"/>
    <property type="molecule type" value="mRNA"/>
</dbReference>
<dbReference type="SMR" id="Q9BE24"/>
<dbReference type="STRING" id="9541.ENSMFAP00000040634"/>
<dbReference type="eggNOG" id="KOG1495">
    <property type="taxonomic scope" value="Eukaryota"/>
</dbReference>
<dbReference type="UniPathway" id="UPA00554">
    <property type="reaction ID" value="UER00611"/>
</dbReference>
<dbReference type="Proteomes" id="UP000233100">
    <property type="component" value="Unplaced"/>
</dbReference>
<dbReference type="GO" id="GO:0005737">
    <property type="term" value="C:cytoplasm"/>
    <property type="evidence" value="ECO:0007669"/>
    <property type="project" value="UniProtKB-SubCell"/>
</dbReference>
<dbReference type="GO" id="GO:0004459">
    <property type="term" value="F:L-lactate dehydrogenase activity"/>
    <property type="evidence" value="ECO:0007669"/>
    <property type="project" value="UniProtKB-EC"/>
</dbReference>
<dbReference type="GO" id="GO:0006089">
    <property type="term" value="P:lactate metabolic process"/>
    <property type="evidence" value="ECO:0007669"/>
    <property type="project" value="TreeGrafter"/>
</dbReference>
<dbReference type="CDD" id="cd05293">
    <property type="entry name" value="LDH_1"/>
    <property type="match status" value="1"/>
</dbReference>
<dbReference type="FunFam" id="3.40.50.720:FF:000029">
    <property type="entry name" value="L-lactate dehydrogenase A chain"/>
    <property type="match status" value="1"/>
</dbReference>
<dbReference type="FunFam" id="3.90.110.10:FF:000003">
    <property type="entry name" value="L-lactate dehydrogenase A chain"/>
    <property type="match status" value="1"/>
</dbReference>
<dbReference type="Gene3D" id="3.90.110.10">
    <property type="entry name" value="Lactate dehydrogenase/glycoside hydrolase, family 4, C-terminal"/>
    <property type="match status" value="1"/>
</dbReference>
<dbReference type="Gene3D" id="3.40.50.720">
    <property type="entry name" value="NAD(P)-binding Rossmann-like Domain"/>
    <property type="match status" value="1"/>
</dbReference>
<dbReference type="HAMAP" id="MF_00488">
    <property type="entry name" value="Lactate_dehydrog"/>
    <property type="match status" value="1"/>
</dbReference>
<dbReference type="InterPro" id="IPR001557">
    <property type="entry name" value="L-lactate/malate_DH"/>
</dbReference>
<dbReference type="InterPro" id="IPR011304">
    <property type="entry name" value="L-lactate_DH"/>
</dbReference>
<dbReference type="InterPro" id="IPR018177">
    <property type="entry name" value="L-lactate_DH_AS"/>
</dbReference>
<dbReference type="InterPro" id="IPR022383">
    <property type="entry name" value="Lactate/malate_DH_C"/>
</dbReference>
<dbReference type="InterPro" id="IPR001236">
    <property type="entry name" value="Lactate/malate_DH_N"/>
</dbReference>
<dbReference type="InterPro" id="IPR015955">
    <property type="entry name" value="Lactate_DH/Glyco_Ohase_4_C"/>
</dbReference>
<dbReference type="InterPro" id="IPR036291">
    <property type="entry name" value="NAD(P)-bd_dom_sf"/>
</dbReference>
<dbReference type="NCBIfam" id="TIGR01771">
    <property type="entry name" value="L-LDH-NAD"/>
    <property type="match status" value="1"/>
</dbReference>
<dbReference type="NCBIfam" id="NF000824">
    <property type="entry name" value="PRK00066.1"/>
    <property type="match status" value="1"/>
</dbReference>
<dbReference type="PANTHER" id="PTHR43128">
    <property type="entry name" value="L-2-HYDROXYCARBOXYLATE DEHYDROGENASE (NAD(P)(+))"/>
    <property type="match status" value="1"/>
</dbReference>
<dbReference type="PANTHER" id="PTHR43128:SF10">
    <property type="entry name" value="L-LACTATE DEHYDROGENASE A CHAIN"/>
    <property type="match status" value="1"/>
</dbReference>
<dbReference type="Pfam" id="PF02866">
    <property type="entry name" value="Ldh_1_C"/>
    <property type="match status" value="1"/>
</dbReference>
<dbReference type="Pfam" id="PF00056">
    <property type="entry name" value="Ldh_1_N"/>
    <property type="match status" value="1"/>
</dbReference>
<dbReference type="PIRSF" id="PIRSF000102">
    <property type="entry name" value="Lac_mal_DH"/>
    <property type="match status" value="1"/>
</dbReference>
<dbReference type="PRINTS" id="PR00086">
    <property type="entry name" value="LLDHDRGNASE"/>
</dbReference>
<dbReference type="SUPFAM" id="SSF56327">
    <property type="entry name" value="LDH C-terminal domain-like"/>
    <property type="match status" value="1"/>
</dbReference>
<dbReference type="SUPFAM" id="SSF51735">
    <property type="entry name" value="NAD(P)-binding Rossmann-fold domains"/>
    <property type="match status" value="1"/>
</dbReference>
<dbReference type="PROSITE" id="PS00064">
    <property type="entry name" value="L_LDH"/>
    <property type="match status" value="1"/>
</dbReference>
<feature type="initiator methionine" description="Removed" evidence="2">
    <location>
        <position position="1"/>
    </location>
</feature>
<feature type="chain" id="PRO_0000168412" description="L-lactate dehydrogenase A chain">
    <location>
        <begin position="2"/>
        <end position="332"/>
    </location>
</feature>
<feature type="active site" description="Proton acceptor" evidence="1">
    <location>
        <position position="193"/>
    </location>
</feature>
<feature type="binding site" evidence="1">
    <location>
        <begin position="29"/>
        <end position="57"/>
    </location>
    <ligand>
        <name>NAD(+)</name>
        <dbReference type="ChEBI" id="CHEBI:57540"/>
    </ligand>
</feature>
<feature type="binding site" evidence="1">
    <location>
        <position position="99"/>
    </location>
    <ligand>
        <name>NAD(+)</name>
        <dbReference type="ChEBI" id="CHEBI:57540"/>
    </ligand>
</feature>
<feature type="binding site" evidence="1">
    <location>
        <position position="106"/>
    </location>
    <ligand>
        <name>substrate</name>
    </ligand>
</feature>
<feature type="binding site" evidence="1">
    <location>
        <position position="138"/>
    </location>
    <ligand>
        <name>NAD(+)</name>
        <dbReference type="ChEBI" id="CHEBI:57540"/>
    </ligand>
</feature>
<feature type="binding site" evidence="1">
    <location>
        <position position="138"/>
    </location>
    <ligand>
        <name>substrate</name>
    </ligand>
</feature>
<feature type="binding site" evidence="1">
    <location>
        <position position="169"/>
    </location>
    <ligand>
        <name>substrate</name>
    </ligand>
</feature>
<feature type="binding site" evidence="1">
    <location>
        <position position="248"/>
    </location>
    <ligand>
        <name>substrate</name>
    </ligand>
</feature>
<feature type="modified residue" description="N-acetylalanine" evidence="2">
    <location>
        <position position="2"/>
    </location>
</feature>
<feature type="modified residue" description="N6-acetyllysine; alternate" evidence="2">
    <location>
        <position position="5"/>
    </location>
</feature>
<feature type="modified residue" description="N6-succinyllysine; alternate" evidence="4">
    <location>
        <position position="5"/>
    </location>
</feature>
<feature type="modified residue" description="N6-acetyllysine" evidence="2">
    <location>
        <position position="14"/>
    </location>
</feature>
<feature type="modified residue" description="Phosphothreonine" evidence="2">
    <location>
        <position position="18"/>
    </location>
</feature>
<feature type="modified residue" description="N6-acetyllysine; alternate" evidence="2">
    <location>
        <position position="57"/>
    </location>
</feature>
<feature type="modified residue" description="N6-acetyllysine" evidence="2">
    <location>
        <position position="81"/>
    </location>
</feature>
<feature type="modified residue" description="N6-acetyllysine; alternate" evidence="2">
    <location>
        <position position="118"/>
    </location>
</feature>
<feature type="modified residue" description="N6-succinyllysine; alternate" evidence="4">
    <location>
        <position position="118"/>
    </location>
</feature>
<feature type="modified residue" description="N6-acetyllysine" evidence="2">
    <location>
        <position position="126"/>
    </location>
</feature>
<feature type="modified residue" description="N6-acetyllysine" evidence="4">
    <location>
        <position position="224"/>
    </location>
</feature>
<feature type="modified residue" description="N6-acetyllysine" evidence="4">
    <location>
        <position position="232"/>
    </location>
</feature>
<feature type="modified residue" description="Phosphotyrosine" evidence="4">
    <location>
        <position position="239"/>
    </location>
</feature>
<feature type="modified residue" description="N6-acetyllysine" evidence="4">
    <location>
        <position position="243"/>
    </location>
</feature>
<feature type="modified residue" description="Phosphothreonine" evidence="3">
    <location>
        <position position="309"/>
    </location>
</feature>
<feature type="modified residue" description="N6-acetyllysine; alternate" evidence="2">
    <location>
        <position position="318"/>
    </location>
</feature>
<feature type="modified residue" description="N6-succinyllysine; alternate" evidence="4">
    <location>
        <position position="318"/>
    </location>
</feature>
<feature type="modified residue" description="Phosphothreonine" evidence="3">
    <location>
        <position position="322"/>
    </location>
</feature>
<feature type="cross-link" description="Glycyl lysine isopeptide (Lys-Gly) (interchain with G-Cter in SUMO2); alternate" evidence="2">
    <location>
        <position position="57"/>
    </location>
</feature>
<feature type="sequence conflict" description="In Ref. 1; BAB41156." evidence="5" ref="1">
    <original>L</original>
    <variation>F</variation>
    <location>
        <position position="70"/>
    </location>
</feature>
<keyword id="KW-0007">Acetylation</keyword>
<keyword id="KW-0963">Cytoplasm</keyword>
<keyword id="KW-1017">Isopeptide bond</keyword>
<keyword id="KW-0520">NAD</keyword>
<keyword id="KW-0560">Oxidoreductase</keyword>
<keyword id="KW-0597">Phosphoprotein</keyword>
<keyword id="KW-1185">Reference proteome</keyword>
<keyword id="KW-0832">Ubl conjugation</keyword>
<protein>
    <recommendedName>
        <fullName>L-lactate dehydrogenase A chain</fullName>
        <shortName>LDH-A</shortName>
        <ecNumber evidence="2">1.1.1.27</ecNumber>
    </recommendedName>
    <alternativeName>
        <fullName>LDH muscle subunit</fullName>
        <shortName>LDH-M</shortName>
    </alternativeName>
</protein>
<comment type="function">
    <text evidence="2">Interconverts simultaneously and stereospecifically pyruvate and lactate with concomitant interconversion of NADH and NAD(+).</text>
</comment>
<comment type="catalytic activity">
    <reaction evidence="2">
        <text>(S)-lactate + NAD(+) = pyruvate + NADH + H(+)</text>
        <dbReference type="Rhea" id="RHEA:23444"/>
        <dbReference type="ChEBI" id="CHEBI:15361"/>
        <dbReference type="ChEBI" id="CHEBI:15378"/>
        <dbReference type="ChEBI" id="CHEBI:16651"/>
        <dbReference type="ChEBI" id="CHEBI:57540"/>
        <dbReference type="ChEBI" id="CHEBI:57945"/>
        <dbReference type="EC" id="1.1.1.27"/>
    </reaction>
    <physiologicalReaction direction="left-to-right" evidence="2">
        <dbReference type="Rhea" id="RHEA:23445"/>
    </physiologicalReaction>
    <physiologicalReaction direction="right-to-left" evidence="2">
        <dbReference type="Rhea" id="RHEA:23446"/>
    </physiologicalReaction>
</comment>
<comment type="pathway">
    <text evidence="2">Fermentation; pyruvate fermentation to lactate; (S)-lactate from pyruvate: step 1/1.</text>
</comment>
<comment type="subunit">
    <text evidence="2">Homotetramer. Interacts with PTEN upstream reading frame protein MP31.</text>
</comment>
<comment type="subcellular location">
    <subcellularLocation>
        <location evidence="1">Cytoplasm</location>
    </subcellularLocation>
</comment>
<comment type="PTM">
    <text evidence="2">ISGylated.</text>
</comment>
<comment type="similarity">
    <text evidence="5">Belongs to the LDH/MDH superfamily. LDH family.</text>
</comment>
<organism>
    <name type="scientific">Macaca fascicularis</name>
    <name type="common">Crab-eating macaque</name>
    <name type="synonym">Cynomolgus monkey</name>
    <dbReference type="NCBI Taxonomy" id="9541"/>
    <lineage>
        <taxon>Eukaryota</taxon>
        <taxon>Metazoa</taxon>
        <taxon>Chordata</taxon>
        <taxon>Craniata</taxon>
        <taxon>Vertebrata</taxon>
        <taxon>Euteleostomi</taxon>
        <taxon>Mammalia</taxon>
        <taxon>Eutheria</taxon>
        <taxon>Euarchontoglires</taxon>
        <taxon>Primates</taxon>
        <taxon>Haplorrhini</taxon>
        <taxon>Catarrhini</taxon>
        <taxon>Cercopithecidae</taxon>
        <taxon>Cercopithecinae</taxon>
        <taxon>Macaca</taxon>
    </lineage>
</organism>
<accession>Q9BE24</accession>
<accession>Q4R5M9</accession>
<accession>Q60HF1</accession>
<name>LDHA_MACFA</name>